<name>SHSA6_HUMAN</name>
<reference key="1">
    <citation type="journal article" date="2006" name="Nature">
        <title>DNA sequence of human chromosome 17 and analysis of rearrangement in the human lineage.</title>
        <authorList>
            <person name="Zody M.C."/>
            <person name="Garber M."/>
            <person name="Adams D.J."/>
            <person name="Sharpe T."/>
            <person name="Harrow J."/>
            <person name="Lupski J.R."/>
            <person name="Nicholson C."/>
            <person name="Searle S.M."/>
            <person name="Wilming L."/>
            <person name="Young S.K."/>
            <person name="Abouelleil A."/>
            <person name="Allen N.R."/>
            <person name="Bi W."/>
            <person name="Bloom T."/>
            <person name="Borowsky M.L."/>
            <person name="Bugalter B.E."/>
            <person name="Butler J."/>
            <person name="Chang J.L."/>
            <person name="Chen C.-K."/>
            <person name="Cook A."/>
            <person name="Corum B."/>
            <person name="Cuomo C.A."/>
            <person name="de Jong P.J."/>
            <person name="DeCaprio D."/>
            <person name="Dewar K."/>
            <person name="FitzGerald M."/>
            <person name="Gilbert J."/>
            <person name="Gibson R."/>
            <person name="Gnerre S."/>
            <person name="Goldstein S."/>
            <person name="Grafham D.V."/>
            <person name="Grocock R."/>
            <person name="Hafez N."/>
            <person name="Hagopian D.S."/>
            <person name="Hart E."/>
            <person name="Norman C.H."/>
            <person name="Humphray S."/>
            <person name="Jaffe D.B."/>
            <person name="Jones M."/>
            <person name="Kamal M."/>
            <person name="Khodiyar V.K."/>
            <person name="LaButti K."/>
            <person name="Laird G."/>
            <person name="Lehoczky J."/>
            <person name="Liu X."/>
            <person name="Lokyitsang T."/>
            <person name="Loveland J."/>
            <person name="Lui A."/>
            <person name="Macdonald P."/>
            <person name="Major J.E."/>
            <person name="Matthews L."/>
            <person name="Mauceli E."/>
            <person name="McCarroll S.A."/>
            <person name="Mihalev A.H."/>
            <person name="Mudge J."/>
            <person name="Nguyen C."/>
            <person name="Nicol R."/>
            <person name="O'Leary S.B."/>
            <person name="Osoegawa K."/>
            <person name="Schwartz D.C."/>
            <person name="Shaw-Smith C."/>
            <person name="Stankiewicz P."/>
            <person name="Steward C."/>
            <person name="Swarbreck D."/>
            <person name="Venkataraman V."/>
            <person name="Whittaker C.A."/>
            <person name="Yang X."/>
            <person name="Zimmer A.R."/>
            <person name="Bradley A."/>
            <person name="Hubbard T."/>
            <person name="Birren B.W."/>
            <person name="Rogers J."/>
            <person name="Lander E.S."/>
            <person name="Nusbaum C."/>
        </authorList>
    </citation>
    <scope>NUCLEOTIDE SEQUENCE [LARGE SCALE GENOMIC DNA]</scope>
</reference>
<reference key="2">
    <citation type="journal article" date="2004" name="Nat. Genet.">
        <title>Complete sequencing and characterization of 21,243 full-length human cDNAs.</title>
        <authorList>
            <person name="Ota T."/>
            <person name="Suzuki Y."/>
            <person name="Nishikawa T."/>
            <person name="Otsuki T."/>
            <person name="Sugiyama T."/>
            <person name="Irie R."/>
            <person name="Wakamatsu A."/>
            <person name="Hayashi K."/>
            <person name="Sato H."/>
            <person name="Nagai K."/>
            <person name="Kimura K."/>
            <person name="Makita H."/>
            <person name="Sekine M."/>
            <person name="Obayashi M."/>
            <person name="Nishi T."/>
            <person name="Shibahara T."/>
            <person name="Tanaka T."/>
            <person name="Ishii S."/>
            <person name="Yamamoto J."/>
            <person name="Saito K."/>
            <person name="Kawai Y."/>
            <person name="Isono Y."/>
            <person name="Nakamura Y."/>
            <person name="Nagahari K."/>
            <person name="Murakami K."/>
            <person name="Yasuda T."/>
            <person name="Iwayanagi T."/>
            <person name="Wagatsuma M."/>
            <person name="Shiratori A."/>
            <person name="Sudo H."/>
            <person name="Hosoiri T."/>
            <person name="Kaku Y."/>
            <person name="Kodaira H."/>
            <person name="Kondo H."/>
            <person name="Sugawara M."/>
            <person name="Takahashi M."/>
            <person name="Kanda K."/>
            <person name="Yokoi T."/>
            <person name="Furuya T."/>
            <person name="Kikkawa E."/>
            <person name="Omura Y."/>
            <person name="Abe K."/>
            <person name="Kamihara K."/>
            <person name="Katsuta N."/>
            <person name="Sato K."/>
            <person name="Tanikawa M."/>
            <person name="Yamazaki M."/>
            <person name="Ninomiya K."/>
            <person name="Ishibashi T."/>
            <person name="Yamashita H."/>
            <person name="Murakawa K."/>
            <person name="Fujimori K."/>
            <person name="Tanai H."/>
            <person name="Kimata M."/>
            <person name="Watanabe M."/>
            <person name="Hiraoka S."/>
            <person name="Chiba Y."/>
            <person name="Ishida S."/>
            <person name="Ono Y."/>
            <person name="Takiguchi S."/>
            <person name="Watanabe S."/>
            <person name="Yosida M."/>
            <person name="Hotuta T."/>
            <person name="Kusano J."/>
            <person name="Kanehori K."/>
            <person name="Takahashi-Fujii A."/>
            <person name="Hara H."/>
            <person name="Tanase T.-O."/>
            <person name="Nomura Y."/>
            <person name="Togiya S."/>
            <person name="Komai F."/>
            <person name="Hara R."/>
            <person name="Takeuchi K."/>
            <person name="Arita M."/>
            <person name="Imose N."/>
            <person name="Musashino K."/>
            <person name="Yuuki H."/>
            <person name="Oshima A."/>
            <person name="Sasaki N."/>
            <person name="Aotsuka S."/>
            <person name="Yoshikawa Y."/>
            <person name="Matsunawa H."/>
            <person name="Ichihara T."/>
            <person name="Shiohata N."/>
            <person name="Sano S."/>
            <person name="Moriya S."/>
            <person name="Momiyama H."/>
            <person name="Satoh N."/>
            <person name="Takami S."/>
            <person name="Terashima Y."/>
            <person name="Suzuki O."/>
            <person name="Nakagawa S."/>
            <person name="Senoh A."/>
            <person name="Mizoguchi H."/>
            <person name="Goto Y."/>
            <person name="Shimizu F."/>
            <person name="Wakebe H."/>
            <person name="Hishigaki H."/>
            <person name="Watanabe T."/>
            <person name="Sugiyama A."/>
            <person name="Takemoto M."/>
            <person name="Kawakami B."/>
            <person name="Yamazaki M."/>
            <person name="Watanabe K."/>
            <person name="Kumagai A."/>
            <person name="Itakura S."/>
            <person name="Fukuzumi Y."/>
            <person name="Fujimori Y."/>
            <person name="Komiyama M."/>
            <person name="Tashiro H."/>
            <person name="Tanigami A."/>
            <person name="Fujiwara T."/>
            <person name="Ono T."/>
            <person name="Yamada K."/>
            <person name="Fujii Y."/>
            <person name="Ozaki K."/>
            <person name="Hirao M."/>
            <person name="Ohmori Y."/>
            <person name="Kawabata A."/>
            <person name="Hikiji T."/>
            <person name="Kobatake N."/>
            <person name="Inagaki H."/>
            <person name="Ikema Y."/>
            <person name="Okamoto S."/>
            <person name="Okitani R."/>
            <person name="Kawakami T."/>
            <person name="Noguchi S."/>
            <person name="Itoh T."/>
            <person name="Shigeta K."/>
            <person name="Senba T."/>
            <person name="Matsumura K."/>
            <person name="Nakajima Y."/>
            <person name="Mizuno T."/>
            <person name="Morinaga M."/>
            <person name="Sasaki M."/>
            <person name="Togashi T."/>
            <person name="Oyama M."/>
            <person name="Hata H."/>
            <person name="Watanabe M."/>
            <person name="Komatsu T."/>
            <person name="Mizushima-Sugano J."/>
            <person name="Satoh T."/>
            <person name="Shirai Y."/>
            <person name="Takahashi Y."/>
            <person name="Nakagawa K."/>
            <person name="Okumura K."/>
            <person name="Nagase T."/>
            <person name="Nomura N."/>
            <person name="Kikuchi H."/>
            <person name="Masuho Y."/>
            <person name="Yamashita R."/>
            <person name="Nakai K."/>
            <person name="Yada T."/>
            <person name="Nakamura Y."/>
            <person name="Ohara O."/>
            <person name="Isogai T."/>
            <person name="Sugano S."/>
        </authorList>
    </citation>
    <scope>NUCLEOTIDE SEQUENCE [LARGE SCALE MRNA] OF 103-500 (ISOFORM 1)</scope>
    <scope>NUCLEOTIDE SEQUENCE [LARGE SCALE MRNA] OF 220-500 (ISOFORM 3)</scope>
    <source>
        <tissue>Subthalamic nucleus</tissue>
    </source>
</reference>
<reference key="3">
    <citation type="submission" date="2005-05" db="EMBL/GenBank/DDBJ databases">
        <authorList>
            <person name="Lin L."/>
            <person name="Nong W."/>
            <person name="Zhou G."/>
            <person name="Ke R."/>
            <person name="Shen C."/>
            <person name="Zhong G."/>
            <person name="Zheng Z."/>
            <person name="Liang M."/>
            <person name="Wen S."/>
            <person name="Li H."/>
            <person name="Yang S."/>
        </authorList>
    </citation>
    <scope>NUCLEOTIDE SEQUENCE [LARGE SCALE MRNA] OF 209-500 (ISOFORM 2)</scope>
</reference>
<reference key="4">
    <citation type="journal article" date="2006" name="Exp. Neurol.">
        <title>Identification of novel genes regulated in the developing human ventral mesencephalon.</title>
        <authorList>
            <person name="Joergensen J.R."/>
            <person name="Juliusson B."/>
            <person name="Henriksen K.F."/>
            <person name="Hansen C."/>
            <person name="Knudsen S."/>
            <person name="Petersen T.N."/>
            <person name="Blom N."/>
            <person name="Seiger A."/>
            <person name="Wahlberg L.U."/>
        </authorList>
    </citation>
    <scope>IDENTIFICATION</scope>
    <scope>TISSUE SPECIFICITY</scope>
</reference>
<protein>
    <recommendedName>
        <fullName evidence="7">Protein shisa-6</fullName>
    </recommendedName>
</protein>
<keyword id="KW-0025">Alternative splicing</keyword>
<keyword id="KW-0325">Glycoprotein</keyword>
<keyword id="KW-0472">Membrane</keyword>
<keyword id="KW-0597">Phosphoprotein</keyword>
<keyword id="KW-1267">Proteomics identification</keyword>
<keyword id="KW-1185">Reference proteome</keyword>
<keyword id="KW-0732">Signal</keyword>
<keyword id="KW-0770">Synapse</keyword>
<keyword id="KW-0812">Transmembrane</keyword>
<keyword id="KW-1133">Transmembrane helix</keyword>
<keyword id="KW-0879">Wnt signaling pathway</keyword>
<feature type="signal peptide" evidence="2">
    <location>
        <begin position="1"/>
        <end position="25"/>
    </location>
</feature>
<feature type="chain" id="PRO_0000326154" description="Protein shisa-6">
    <location>
        <begin position="26"/>
        <end position="500"/>
    </location>
</feature>
<feature type="topological domain" description="Extracellular" evidence="2">
    <location>
        <begin position="26"/>
        <end position="174"/>
    </location>
</feature>
<feature type="transmembrane region" description="Helical" evidence="2">
    <location>
        <begin position="175"/>
        <end position="195"/>
    </location>
</feature>
<feature type="topological domain" description="Cytoplasmic" evidence="2">
    <location>
        <begin position="196"/>
        <end position="500"/>
    </location>
</feature>
<feature type="region of interest" description="Disordered" evidence="3">
    <location>
        <begin position="52"/>
        <end position="73"/>
    </location>
</feature>
<feature type="region of interest" description="Disordered" evidence="3">
    <location>
        <begin position="240"/>
        <end position="269"/>
    </location>
</feature>
<feature type="region of interest" description="Disordered" evidence="3">
    <location>
        <begin position="349"/>
        <end position="378"/>
    </location>
</feature>
<feature type="region of interest" description="Disordered" evidence="3">
    <location>
        <begin position="444"/>
        <end position="470"/>
    </location>
</feature>
<feature type="short sequence motif" description="PDZ-binding" evidence="1">
    <location>
        <begin position="497"/>
        <end position="500"/>
    </location>
</feature>
<feature type="compositionally biased region" description="Polar residues" evidence="3">
    <location>
        <begin position="240"/>
        <end position="255"/>
    </location>
</feature>
<feature type="compositionally biased region" description="Polar residues" evidence="3">
    <location>
        <begin position="448"/>
        <end position="464"/>
    </location>
</feature>
<feature type="modified residue" description="Phosphoserine" evidence="1">
    <location>
        <position position="391"/>
    </location>
</feature>
<feature type="modified residue" description="Phosphoserine" evidence="1">
    <location>
        <position position="397"/>
    </location>
</feature>
<feature type="modified residue" description="Phosphoserine" evidence="1">
    <location>
        <position position="409"/>
    </location>
</feature>
<feature type="modified residue" description="Phosphothreonine" evidence="1">
    <location>
        <position position="433"/>
    </location>
</feature>
<feature type="modified residue" description="Phosphothreonine" evidence="1">
    <location>
        <position position="477"/>
    </location>
</feature>
<feature type="glycosylation site" description="N-linked (GlcNAc...) asparagine" evidence="2">
    <location>
        <position position="32"/>
    </location>
</feature>
<feature type="glycosylation site" description="N-linked (GlcNAc...) asparagine" evidence="2">
    <location>
        <position position="59"/>
    </location>
</feature>
<feature type="splice variant" id="VSP_032565" description="In isoform 2." evidence="6">
    <original>P</original>
    <variation>PGHYGKDAYRSGGPDLHNFISSGFVTLGRGHTK</variation>
    <location>
        <position position="266"/>
    </location>
</feature>
<feature type="splice variant" id="VSP_040558" description="In isoform 3." evidence="5">
    <original>P</original>
    <variation>PGHYGKDAYRSGGPDLHNFISSGFVTLGRGHTKGDHQYNHPILSSVTQIPPH</variation>
    <location>
        <position position="266"/>
    </location>
</feature>
<feature type="sequence conflict" description="In Ref. 3; AAY68487." evidence="7" ref="3">
    <original>S</original>
    <variation>P</variation>
    <location>
        <position position="250"/>
    </location>
</feature>
<feature type="sequence conflict" description="In Ref. 3; AAY68487." evidence="7" ref="3">
    <original>PPS</original>
    <variation>SPP</variation>
    <location>
        <begin position="297"/>
        <end position="299"/>
    </location>
</feature>
<accession>Q6ZSJ9</accession>
<accession>B3KXV5</accession>
<accession>Q4PL63</accession>
<sequence length="500" mass="55764">MALRRLLLLLLLSLESLDLLPSVHGARGRAANRTLSAGGAAVGGRRAGGALARGGRELNGTARAPGIPEAGSRRGQPAAAVAAAASAAVTYETCWGYYDVSGQYDKEFECNNSESGYLYCCGTCYYRFCCKKRHEKLDQRQCTNYQSPVWVQTPSTKVVSPGPENKYDPEKDKTNFTVYITCGVIAFVIVAGVFAKVSYDKAHRPPREMNIHRALADILRQQGPIPIAHCERETISAIDTSPKENTPVRSSSKNHYTPVRTAKQTPEKPRMNNILTSATEPYDLSFSRSFQNLAHLPPSYESAVKTNPSKYSSLKRLTDKEADEYYMRRRHLPDLAARGTLPLNVIQMSQQKPLPRERPRRPIRAMSQDRVLSPDRGLPDEFSMPYDRILSDEQLLSTERLHSQDPLLSPERTAFPEQSLSRAISHTDVFVSTPVLDRYRMSKMHSHPSASNNSYATLGQSQTAAKRHAFASRRHNTVEQLHYIPGHHTCYTASKTEVTV</sequence>
<dbReference type="EMBL" id="AC005725">
    <property type="status" value="NOT_ANNOTATED_CDS"/>
    <property type="molecule type" value="Genomic_DNA"/>
</dbReference>
<dbReference type="EMBL" id="AC007510">
    <property type="status" value="NOT_ANNOTATED_CDS"/>
    <property type="molecule type" value="Genomic_DNA"/>
</dbReference>
<dbReference type="EMBL" id="AC055825">
    <property type="status" value="NOT_ANNOTATED_CDS"/>
    <property type="molecule type" value="Genomic_DNA"/>
</dbReference>
<dbReference type="EMBL" id="AK127379">
    <property type="protein sequence ID" value="BAC86949.1"/>
    <property type="status" value="ALT_INIT"/>
    <property type="molecule type" value="mRNA"/>
</dbReference>
<dbReference type="EMBL" id="AK128003">
    <property type="protein sequence ID" value="BAG54617.1"/>
    <property type="status" value="ALT_INIT"/>
    <property type="molecule type" value="mRNA"/>
</dbReference>
<dbReference type="EMBL" id="DQ070854">
    <property type="protein sequence ID" value="AAY68487.1"/>
    <property type="molecule type" value="mRNA"/>
</dbReference>
<dbReference type="CCDS" id="CCDS45615.1">
    <molecule id="Q6ZSJ9-3"/>
</dbReference>
<dbReference type="CCDS" id="CCDS54089.1">
    <molecule id="Q6ZSJ9-2"/>
</dbReference>
<dbReference type="CCDS" id="CCDS54090.1">
    <molecule id="Q6ZSJ9-1"/>
</dbReference>
<dbReference type="RefSeq" id="NP_001166932.1">
    <molecule id="Q6ZSJ9-1"/>
    <property type="nucleotide sequence ID" value="NM_001173461.2"/>
</dbReference>
<dbReference type="RefSeq" id="NP_001166933.1">
    <molecule id="Q6ZSJ9-2"/>
    <property type="nucleotide sequence ID" value="NM_001173462.2"/>
</dbReference>
<dbReference type="RefSeq" id="NP_997269.2">
    <molecule id="Q6ZSJ9-3"/>
    <property type="nucleotide sequence ID" value="NM_207386.4"/>
</dbReference>
<dbReference type="SMR" id="Q6ZSJ9"/>
<dbReference type="BioGRID" id="132648">
    <property type="interactions" value="42"/>
</dbReference>
<dbReference type="FunCoup" id="Q6ZSJ9">
    <property type="interactions" value="10"/>
</dbReference>
<dbReference type="IntAct" id="Q6ZSJ9">
    <property type="interactions" value="39"/>
</dbReference>
<dbReference type="MINT" id="Q6ZSJ9"/>
<dbReference type="STRING" id="9606.ENSP00000390084"/>
<dbReference type="TCDB" id="8.A.83.1.1">
    <property type="family name" value="the shisa6 regulator of short-term neuronal synaptic plasticity (shisa) family"/>
</dbReference>
<dbReference type="GlyCosmos" id="Q6ZSJ9">
    <property type="glycosylation" value="2 sites, No reported glycans"/>
</dbReference>
<dbReference type="GlyGen" id="Q6ZSJ9">
    <property type="glycosylation" value="4 sites, 1 N-linked glycan (1 site), 1 O-linked glycan (2 sites)"/>
</dbReference>
<dbReference type="iPTMnet" id="Q6ZSJ9"/>
<dbReference type="PhosphoSitePlus" id="Q6ZSJ9"/>
<dbReference type="BioMuta" id="SHISA6"/>
<dbReference type="DMDM" id="172046182"/>
<dbReference type="jPOST" id="Q6ZSJ9"/>
<dbReference type="MassIVE" id="Q6ZSJ9"/>
<dbReference type="PaxDb" id="9606-ENSP00000390084"/>
<dbReference type="PeptideAtlas" id="Q6ZSJ9"/>
<dbReference type="ProteomicsDB" id="68222">
    <molecule id="Q6ZSJ9-1"/>
</dbReference>
<dbReference type="ProteomicsDB" id="68223">
    <molecule id="Q6ZSJ9-2"/>
</dbReference>
<dbReference type="ProteomicsDB" id="68224">
    <molecule id="Q6ZSJ9-3"/>
</dbReference>
<dbReference type="Antibodypedia" id="6361">
    <property type="antibodies" value="76 antibodies from 20 providers"/>
</dbReference>
<dbReference type="DNASU" id="388336"/>
<dbReference type="Ensembl" id="ENST00000409168.7">
    <molecule id="Q6ZSJ9-1"/>
    <property type="protein sequence ID" value="ENSP00000387157.3"/>
    <property type="gene ID" value="ENSG00000188803.15"/>
</dbReference>
<dbReference type="Ensembl" id="ENST00000432116.7">
    <molecule id="Q6ZSJ9-2"/>
    <property type="protein sequence ID" value="ENSP00000388659.3"/>
    <property type="gene ID" value="ENSG00000188803.15"/>
</dbReference>
<dbReference type="Ensembl" id="ENST00000441885.8">
    <molecule id="Q6ZSJ9-3"/>
    <property type="protein sequence ID" value="ENSP00000390084.3"/>
    <property type="gene ID" value="ENSG00000188803.15"/>
</dbReference>
<dbReference type="GeneID" id="388336"/>
<dbReference type="KEGG" id="hsa:388336"/>
<dbReference type="MANE-Select" id="ENST00000441885.8">
    <molecule id="Q6ZSJ9-3"/>
    <property type="protein sequence ID" value="ENSP00000390084.3"/>
    <property type="RefSeq nucleotide sequence ID" value="NM_207386.4"/>
    <property type="RefSeq protein sequence ID" value="NP_997269.2"/>
</dbReference>
<dbReference type="UCSC" id="uc002gna.4">
    <molecule id="Q6ZSJ9-1"/>
    <property type="organism name" value="human"/>
</dbReference>
<dbReference type="AGR" id="HGNC:34491"/>
<dbReference type="CTD" id="388336"/>
<dbReference type="DisGeNET" id="388336"/>
<dbReference type="GeneCards" id="SHISA6"/>
<dbReference type="HGNC" id="HGNC:34491">
    <property type="gene designation" value="SHISA6"/>
</dbReference>
<dbReference type="HPA" id="ENSG00000188803">
    <property type="expression patterns" value="Tissue enhanced (brain, cervix)"/>
</dbReference>
<dbReference type="MIM" id="617327">
    <property type="type" value="gene"/>
</dbReference>
<dbReference type="neXtProt" id="NX_Q6ZSJ9"/>
<dbReference type="OpenTargets" id="ENSG00000188803"/>
<dbReference type="PharmGKB" id="PA165432740"/>
<dbReference type="VEuPathDB" id="HostDB:ENSG00000188803"/>
<dbReference type="eggNOG" id="ENOG502QUEF">
    <property type="taxonomic scope" value="Eukaryota"/>
</dbReference>
<dbReference type="GeneTree" id="ENSGT00940000156854"/>
<dbReference type="HOGENOM" id="CLU_025677_1_0_1"/>
<dbReference type="InParanoid" id="Q6ZSJ9"/>
<dbReference type="OMA" id="GKSTHQH"/>
<dbReference type="OrthoDB" id="9836398at2759"/>
<dbReference type="PAN-GO" id="Q6ZSJ9">
    <property type="GO annotations" value="6 GO annotations based on evolutionary models"/>
</dbReference>
<dbReference type="PhylomeDB" id="Q6ZSJ9"/>
<dbReference type="TreeFam" id="TF330800"/>
<dbReference type="PathwayCommons" id="Q6ZSJ9"/>
<dbReference type="SignaLink" id="Q6ZSJ9"/>
<dbReference type="BioGRID-ORCS" id="388336">
    <property type="hits" value="12 hits in 1133 CRISPR screens"/>
</dbReference>
<dbReference type="ChiTaRS" id="SHISA6">
    <property type="organism name" value="human"/>
</dbReference>
<dbReference type="GenomeRNAi" id="388336"/>
<dbReference type="Pharos" id="Q6ZSJ9">
    <property type="development level" value="Tdark"/>
</dbReference>
<dbReference type="PRO" id="PR:Q6ZSJ9"/>
<dbReference type="Proteomes" id="UP000005640">
    <property type="component" value="Chromosome 17"/>
</dbReference>
<dbReference type="RNAct" id="Q6ZSJ9">
    <property type="molecule type" value="protein"/>
</dbReference>
<dbReference type="Bgee" id="ENSG00000188803">
    <property type="expression patterns" value="Expressed in lateral nuclear group of thalamus and 120 other cell types or tissues"/>
</dbReference>
<dbReference type="ExpressionAtlas" id="Q6ZSJ9">
    <property type="expression patterns" value="baseline and differential"/>
</dbReference>
<dbReference type="GO" id="GO:0032281">
    <property type="term" value="C:AMPA glutamate receptor complex"/>
    <property type="evidence" value="ECO:0000318"/>
    <property type="project" value="GO_Central"/>
</dbReference>
<dbReference type="GO" id="GO:0098985">
    <property type="term" value="C:asymmetric, glutamatergic, excitatory synapse"/>
    <property type="evidence" value="ECO:0000250"/>
    <property type="project" value="UniProtKB"/>
</dbReference>
<dbReference type="GO" id="GO:0032591">
    <property type="term" value="C:dendritic spine membrane"/>
    <property type="evidence" value="ECO:0000318"/>
    <property type="project" value="GO_Central"/>
</dbReference>
<dbReference type="GO" id="GO:0014069">
    <property type="term" value="C:postsynaptic density"/>
    <property type="evidence" value="ECO:0000250"/>
    <property type="project" value="UniProtKB"/>
</dbReference>
<dbReference type="GO" id="GO:0098839">
    <property type="term" value="C:postsynaptic density membrane"/>
    <property type="evidence" value="ECO:0007669"/>
    <property type="project" value="Ensembl"/>
</dbReference>
<dbReference type="GO" id="GO:0045211">
    <property type="term" value="C:postsynaptic membrane"/>
    <property type="evidence" value="ECO:0000318"/>
    <property type="project" value="GO_Central"/>
</dbReference>
<dbReference type="GO" id="GO:0035255">
    <property type="term" value="F:ionotropic glutamate receptor binding"/>
    <property type="evidence" value="ECO:0000250"/>
    <property type="project" value="UniProtKB"/>
</dbReference>
<dbReference type="GO" id="GO:0030165">
    <property type="term" value="F:PDZ domain binding"/>
    <property type="evidence" value="ECO:0007669"/>
    <property type="project" value="Ensembl"/>
</dbReference>
<dbReference type="GO" id="GO:0098976">
    <property type="term" value="P:excitatory chemical synaptic transmission"/>
    <property type="evidence" value="ECO:0000250"/>
    <property type="project" value="UniProtKB"/>
</dbReference>
<dbReference type="GO" id="GO:0090090">
    <property type="term" value="P:negative regulation of canonical Wnt signaling pathway"/>
    <property type="evidence" value="ECO:0000250"/>
    <property type="project" value="UniProtKB"/>
</dbReference>
<dbReference type="GO" id="GO:0098970">
    <property type="term" value="P:postsynaptic neurotransmitter receptor diffusion trapping"/>
    <property type="evidence" value="ECO:0007669"/>
    <property type="project" value="Ensembl"/>
</dbReference>
<dbReference type="GO" id="GO:1904717">
    <property type="term" value="P:regulation of AMPA glutamate receptor clustering"/>
    <property type="evidence" value="ECO:0000250"/>
    <property type="project" value="UniProtKB"/>
</dbReference>
<dbReference type="GO" id="GO:0048172">
    <property type="term" value="P:regulation of short-term neuronal synaptic plasticity"/>
    <property type="evidence" value="ECO:0000318"/>
    <property type="project" value="GO_Central"/>
</dbReference>
<dbReference type="GO" id="GO:0007283">
    <property type="term" value="P:spermatogenesis"/>
    <property type="evidence" value="ECO:0000250"/>
    <property type="project" value="UniProtKB"/>
</dbReference>
<dbReference type="GO" id="GO:0016055">
    <property type="term" value="P:Wnt signaling pathway"/>
    <property type="evidence" value="ECO:0007669"/>
    <property type="project" value="UniProtKB-KW"/>
</dbReference>
<dbReference type="InterPro" id="IPR026910">
    <property type="entry name" value="Shisa"/>
</dbReference>
<dbReference type="InterPro" id="IPR053891">
    <property type="entry name" value="Shisa_N"/>
</dbReference>
<dbReference type="PANTHER" id="PTHR31774:SF0">
    <property type="entry name" value="PROTEIN SHISA-6"/>
    <property type="match status" value="1"/>
</dbReference>
<dbReference type="PANTHER" id="PTHR31774">
    <property type="entry name" value="PROTEIN SHISA-9-RELATED"/>
    <property type="match status" value="1"/>
</dbReference>
<dbReference type="Pfam" id="PF13908">
    <property type="entry name" value="Shisa_N"/>
    <property type="match status" value="1"/>
</dbReference>
<gene>
    <name evidence="8" type="primary">SHISA6</name>
</gene>
<proteinExistence type="evidence at protein level"/>
<comment type="function">
    <text evidence="1">Involved in maintenance of high-frequency synaptic transmission at hippocampal CA3-CA1 synapses. Regulates AMPA-type glutamate receptor (AMPAR) immobilization at postsynaptic density keeping the channels in an activated state in the presence of glutamate and preventing synaptic depression. May play a role in self-renewal and differentiation of spermatogonial stem cells by inhibiting canonical Wnt signaling pathway.</text>
</comment>
<comment type="subunit">
    <text evidence="1">Component of the postsynaptic hippocampal AMPA-type glutamate receptor (AMPAR) complex, at least composed of pore forming AMPAR subunits GRIA1, GRIA2 and GRIA3 and AMPAR auxiliary proteins SHISA6 and SHISA7. Interacts (via PDZ-binding motif) with DLG4/PSD-95 (via PDZ domain); the interaction is direct.</text>
</comment>
<comment type="interaction">
    <interactant intactId="EBI-12037847">
        <id>Q6ZSJ9</id>
    </interactant>
    <interactant intactId="EBI-11954519">
        <id>Q49AR9</id>
        <label>ANKS1A</label>
    </interactant>
    <organismsDiffer>false</organismsDiffer>
    <experiments>3</experiments>
</comment>
<comment type="interaction">
    <interactant intactId="EBI-12037847">
        <id>Q6ZSJ9</id>
    </interactant>
    <interactant intactId="EBI-742909">
        <id>Q9H6L4</id>
        <label>ARMC7</label>
    </interactant>
    <organismsDiffer>false</organismsDiffer>
    <experiments>3</experiments>
</comment>
<comment type="interaction">
    <interactant intactId="EBI-12037847">
        <id>Q6ZSJ9</id>
    </interactant>
    <interactant intactId="EBI-747185">
        <id>O95817</id>
        <label>BAG3</label>
    </interactant>
    <organismsDiffer>false</organismsDiffer>
    <experiments>5</experiments>
</comment>
<comment type="interaction">
    <interactant intactId="EBI-12037847">
        <id>Q6ZSJ9</id>
    </interactant>
    <interactant intactId="EBI-11530605">
        <id>Q9H257-2</id>
        <label>CARD9</label>
    </interactant>
    <organismsDiffer>false</organismsDiffer>
    <experiments>3</experiments>
</comment>
<comment type="interaction">
    <interactant intactId="EBI-12037847">
        <id>Q6ZSJ9</id>
    </interactant>
    <interactant intactId="EBI-10961624">
        <id>Q2TAC2-2</id>
        <label>CCDC57</label>
    </interactant>
    <organismsDiffer>false</organismsDiffer>
    <experiments>3</experiments>
</comment>
<comment type="interaction">
    <interactant intactId="EBI-12037847">
        <id>Q6ZSJ9</id>
    </interactant>
    <interactant intactId="EBI-375077">
        <id>P38936</id>
        <label>CDKN1A</label>
    </interactant>
    <organismsDiffer>false</organismsDiffer>
    <experiments>3</experiments>
</comment>
<comment type="interaction">
    <interactant intactId="EBI-12037847">
        <id>Q6ZSJ9</id>
    </interactant>
    <interactant intactId="EBI-725145">
        <id>O76071</id>
        <label>CIAO1</label>
    </interactant>
    <organismsDiffer>false</organismsDiffer>
    <experiments>3</experiments>
</comment>
<comment type="interaction">
    <interactant intactId="EBI-12037847">
        <id>Q6ZSJ9</id>
    </interactant>
    <interactant intactId="EBI-10171902">
        <id>P56545-3</id>
        <label>CTBP2</label>
    </interactant>
    <organismsDiffer>false</organismsDiffer>
    <experiments>3</experiments>
</comment>
<comment type="interaction">
    <interactant intactId="EBI-12037847">
        <id>Q6ZSJ9</id>
    </interactant>
    <interactant intactId="EBI-3867333">
        <id>A8MQ03</id>
        <label>CYSRT1</label>
    </interactant>
    <organismsDiffer>false</organismsDiffer>
    <experiments>3</experiments>
</comment>
<comment type="interaction">
    <interactant intactId="EBI-12037847">
        <id>Q6ZSJ9</id>
    </interactant>
    <interactant intactId="EBI-371876">
        <id>Q9NQT4</id>
        <label>EXOSC5</label>
    </interactant>
    <organismsDiffer>false</organismsDiffer>
    <experiments>3</experiments>
</comment>
<comment type="interaction">
    <interactant intactId="EBI-12037847">
        <id>Q6ZSJ9</id>
    </interactant>
    <interactant intactId="EBI-3864120">
        <id>Q8WUP2</id>
        <label>FBLIM1</label>
    </interactant>
    <organismsDiffer>false</organismsDiffer>
    <experiments>3</experiments>
</comment>
<comment type="interaction">
    <interactant intactId="EBI-12037847">
        <id>Q6ZSJ9</id>
    </interactant>
    <interactant intactId="EBI-618309">
        <id>Q08379</id>
        <label>GOLGA2</label>
    </interactant>
    <organismsDiffer>false</organismsDiffer>
    <experiments>3</experiments>
</comment>
<comment type="interaction">
    <interactant intactId="EBI-12037847">
        <id>Q6ZSJ9</id>
    </interactant>
    <interactant intactId="EBI-7116203">
        <id>O75031</id>
        <label>HSF2BP</label>
    </interactant>
    <organismsDiffer>false</organismsDiffer>
    <experiments>3</experiments>
</comment>
<comment type="interaction">
    <interactant intactId="EBI-12037847">
        <id>Q6ZSJ9</id>
    </interactant>
    <interactant intactId="EBI-399080">
        <id>Q92993</id>
        <label>KAT5</label>
    </interactant>
    <organismsDiffer>false</organismsDiffer>
    <experiments>3</experiments>
</comment>
<comment type="interaction">
    <interactant intactId="EBI-12037847">
        <id>Q6ZSJ9</id>
    </interactant>
    <interactant intactId="EBI-8472129">
        <id>Q9HAQ2</id>
        <label>KIF9</label>
    </interactant>
    <organismsDiffer>false</organismsDiffer>
    <experiments>3</experiments>
</comment>
<comment type="interaction">
    <interactant intactId="EBI-12037847">
        <id>Q6ZSJ9</id>
    </interactant>
    <interactant intactId="EBI-14069005">
        <id>Q9BVG8-5</id>
        <label>KIFC3</label>
    </interactant>
    <organismsDiffer>false</organismsDiffer>
    <experiments>3</experiments>
</comment>
<comment type="interaction">
    <interactant intactId="EBI-12037847">
        <id>Q6ZSJ9</id>
    </interactant>
    <interactant intactId="EBI-948001">
        <id>Q15323</id>
        <label>KRT31</label>
    </interactant>
    <organismsDiffer>false</organismsDiffer>
    <experiments>3</experiments>
</comment>
<comment type="interaction">
    <interactant intactId="EBI-12037847">
        <id>Q6ZSJ9</id>
    </interactant>
    <interactant intactId="EBI-3957694">
        <id>Q9BYR6</id>
        <label>KRTAP3-3</label>
    </interactant>
    <organismsDiffer>false</organismsDiffer>
    <experiments>3</experiments>
</comment>
<comment type="interaction">
    <interactant intactId="EBI-12037847">
        <id>Q6ZSJ9</id>
    </interactant>
    <interactant intactId="EBI-11742507">
        <id>Q8TAP4-4</id>
        <label>LMO3</label>
    </interactant>
    <organismsDiffer>false</organismsDiffer>
    <experiments>3</experiments>
</comment>
<comment type="interaction">
    <interactant intactId="EBI-12037847">
        <id>Q6ZSJ9</id>
    </interactant>
    <interactant intactId="EBI-11980721">
        <id>P46934-3</id>
        <label>NEDD4</label>
    </interactant>
    <organismsDiffer>false</organismsDiffer>
    <experiments>3</experiments>
</comment>
<comment type="interaction">
    <interactant intactId="EBI-12037847">
        <id>Q6ZSJ9</id>
    </interactant>
    <interactant intactId="EBI-536879">
        <id>O43482</id>
        <label>OIP5</label>
    </interactant>
    <organismsDiffer>false</organismsDiffer>
    <experiments>6</experiments>
</comment>
<comment type="interaction">
    <interactant intactId="EBI-12037847">
        <id>Q6ZSJ9</id>
    </interactant>
    <interactant intactId="EBI-357275">
        <id>Q99471</id>
        <label>PFDN5</label>
    </interactant>
    <organismsDiffer>false</organismsDiffer>
    <experiments>3</experiments>
</comment>
<comment type="interaction">
    <interactant intactId="EBI-12037847">
        <id>Q6ZSJ9</id>
    </interactant>
    <interactant intactId="EBI-949255">
        <id>Q58EX7</id>
        <label>PLEKHG4</label>
    </interactant>
    <organismsDiffer>false</organismsDiffer>
    <experiments>3</experiments>
</comment>
<comment type="interaction">
    <interactant intactId="EBI-12037847">
        <id>Q6ZSJ9</id>
    </interactant>
    <interactant intactId="EBI-358489">
        <id>Q96GM5</id>
        <label>SMARCD1</label>
    </interactant>
    <organismsDiffer>false</organismsDiffer>
    <experiments>3</experiments>
</comment>
<comment type="interaction">
    <interactant intactId="EBI-12037847">
        <id>Q6ZSJ9</id>
    </interactant>
    <interactant intactId="EBI-11741437">
        <id>Q08117-2</id>
        <label>TLE5</label>
    </interactant>
    <organismsDiffer>false</organismsDiffer>
    <experiments>3</experiments>
</comment>
<comment type="interaction">
    <interactant intactId="EBI-12037847">
        <id>Q6ZSJ9</id>
    </interactant>
    <interactant intactId="EBI-742327">
        <id>Q15654</id>
        <label>TRIP6</label>
    </interactant>
    <organismsDiffer>false</organismsDiffer>
    <experiments>3</experiments>
</comment>
<comment type="interaction">
    <interactant intactId="EBI-12037847">
        <id>Q6ZSJ9</id>
    </interactant>
    <interactant intactId="EBI-3918381">
        <id>Q96PN8</id>
        <label>TSSK3</label>
    </interactant>
    <organismsDiffer>false</organismsDiffer>
    <experiments>3</experiments>
</comment>
<comment type="interaction">
    <interactant intactId="EBI-12037847">
        <id>Q6ZSJ9</id>
    </interactant>
    <interactant intactId="EBI-948354">
        <id>Q6DKK2</id>
        <label>TTC19</label>
    </interactant>
    <organismsDiffer>false</organismsDiffer>
    <experiments>3</experiments>
</comment>
<comment type="interaction">
    <interactant intactId="EBI-12037847">
        <id>Q6ZSJ9</id>
    </interactant>
    <interactant intactId="EBI-7353612">
        <id>P57075-2</id>
        <label>UBASH3A</label>
    </interactant>
    <organismsDiffer>false</organismsDiffer>
    <experiments>3</experiments>
</comment>
<comment type="subcellular location">
    <subcellularLocation>
        <location evidence="7">Membrane</location>
        <topology evidence="1">Single-pass type I membrane protein</topology>
    </subcellularLocation>
    <subcellularLocation>
        <location evidence="1">Postsynaptic density</location>
    </subcellularLocation>
</comment>
<comment type="alternative products">
    <event type="alternative splicing"/>
    <isoform>
        <id>Q6ZSJ9-1</id>
        <name>1</name>
        <sequence type="displayed"/>
    </isoform>
    <isoform>
        <id>Q6ZSJ9-2</id>
        <name>2</name>
        <sequence type="described" ref="VSP_032565"/>
    </isoform>
    <isoform>
        <id>Q6ZSJ9-3</id>
        <name>3</name>
        <sequence type="described" ref="VSP_040558"/>
    </isoform>
</comment>
<comment type="tissue specificity">
    <text evidence="4">Expressed in the developing ventral mesencephalon.</text>
</comment>
<comment type="domain">
    <text evidence="1">The PDZ-binding motif interacts with PDZ-domain of scaffolding protein DLG4.</text>
</comment>
<comment type="similarity">
    <text evidence="7">Belongs to the shisa family.</text>
</comment>
<comment type="sequence caution" evidence="7">
    <conflict type="erroneous initiation">
        <sequence resource="EMBL-CDS" id="BAC86949"/>
    </conflict>
    <text>Truncated N-terminus.</text>
</comment>
<comment type="sequence caution" evidence="7">
    <conflict type="erroneous initiation">
        <sequence resource="EMBL-CDS" id="BAG54617"/>
    </conflict>
    <text>Truncated N-terminus.</text>
</comment>
<organism>
    <name type="scientific">Homo sapiens</name>
    <name type="common">Human</name>
    <dbReference type="NCBI Taxonomy" id="9606"/>
    <lineage>
        <taxon>Eukaryota</taxon>
        <taxon>Metazoa</taxon>
        <taxon>Chordata</taxon>
        <taxon>Craniata</taxon>
        <taxon>Vertebrata</taxon>
        <taxon>Euteleostomi</taxon>
        <taxon>Mammalia</taxon>
        <taxon>Eutheria</taxon>
        <taxon>Euarchontoglires</taxon>
        <taxon>Primates</taxon>
        <taxon>Haplorrhini</taxon>
        <taxon>Catarrhini</taxon>
        <taxon>Hominidae</taxon>
        <taxon>Homo</taxon>
    </lineage>
</organism>
<evidence type="ECO:0000250" key="1">
    <source>
        <dbReference type="UniProtKB" id="Q3UH99"/>
    </source>
</evidence>
<evidence type="ECO:0000255" key="2"/>
<evidence type="ECO:0000256" key="3">
    <source>
        <dbReference type="SAM" id="MobiDB-lite"/>
    </source>
</evidence>
<evidence type="ECO:0000269" key="4">
    <source>
    </source>
</evidence>
<evidence type="ECO:0000303" key="5">
    <source>
    </source>
</evidence>
<evidence type="ECO:0000303" key="6">
    <source ref="3"/>
</evidence>
<evidence type="ECO:0000305" key="7"/>
<evidence type="ECO:0000312" key="8">
    <source>
        <dbReference type="HGNC" id="HGNC:34491"/>
    </source>
</evidence>